<evidence type="ECO:0000255" key="1">
    <source>
        <dbReference type="HAMAP-Rule" id="MF_01864"/>
    </source>
</evidence>
<evidence type="ECO:0000255" key="2">
    <source>
        <dbReference type="PROSITE-ProRule" id="PRU01266"/>
    </source>
</evidence>
<gene>
    <name evidence="1" type="primary">miaB</name>
    <name type="ordered locus">Amuc_0849</name>
</gene>
<organism>
    <name type="scientific">Akkermansia muciniphila (strain ATCC BAA-835 / DSM 22959 / JCM 33894 / BCRC 81048 / CCUG 64013 / CIP 107961 / Muc)</name>
    <dbReference type="NCBI Taxonomy" id="349741"/>
    <lineage>
        <taxon>Bacteria</taxon>
        <taxon>Pseudomonadati</taxon>
        <taxon>Verrucomicrobiota</taxon>
        <taxon>Verrucomicrobiia</taxon>
        <taxon>Verrucomicrobiales</taxon>
        <taxon>Akkermansiaceae</taxon>
        <taxon>Akkermansia</taxon>
    </lineage>
</organism>
<keyword id="KW-0004">4Fe-4S</keyword>
<keyword id="KW-0963">Cytoplasm</keyword>
<keyword id="KW-0408">Iron</keyword>
<keyword id="KW-0411">Iron-sulfur</keyword>
<keyword id="KW-0479">Metal-binding</keyword>
<keyword id="KW-1185">Reference proteome</keyword>
<keyword id="KW-0949">S-adenosyl-L-methionine</keyword>
<keyword id="KW-0808">Transferase</keyword>
<keyword id="KW-0819">tRNA processing</keyword>
<sequence>MPKLYIKTYGCQMNERDSEQVARMFVQKGYTMTDREDEADVILFNSCSIREQAEQKALGKMGLLAKQQRHRPHVVYGMMGCMAQSKKEELFKELPRLDLVVGTQKYHRVFEHVDGILRARQERRMDELQTAFSGTHVCDVAEEADSQNRIRDHLNPGVRSTAYVSIMQGCEMKCAYCIVPYTRGAERSRPIRDVVDEVKMLADAGVKEVTLLGQIVNRYGRQMETAGGKGGFVQLLEAVHEVEGIRRIRFVSPHPIGFRQDLVQAFTYLPKLCSHIHFPMQSGSDRILKMMRRPYRNETYLDLCSRMKQARPDLSITTDIIVGFPGETEEDYLLTRQAVEQVQFDNAFIFRYSPRRGTPAAVMENQIPEEVKEARNQDLLAVVNEIAIRKNRDLVGTVQEVLLEGPSKTNAARLSGRTSQNKPVMVDAAPDLAGEILPIRIEESTGFTLYGVPCPSRG</sequence>
<reference key="1">
    <citation type="journal article" date="2011" name="PLoS ONE">
        <title>The genome of Akkermansia muciniphila, a dedicated intestinal mucin degrader, and its use in exploring intestinal metagenomes.</title>
        <authorList>
            <person name="van Passel M.W."/>
            <person name="Kant R."/>
            <person name="Zoetendal E.G."/>
            <person name="Plugge C.M."/>
            <person name="Derrien M."/>
            <person name="Malfatti S.A."/>
            <person name="Chain P.S."/>
            <person name="Woyke T."/>
            <person name="Palva A."/>
            <person name="de Vos W.M."/>
            <person name="Smidt H."/>
        </authorList>
    </citation>
    <scope>NUCLEOTIDE SEQUENCE [LARGE SCALE GENOMIC DNA]</scope>
    <source>
        <strain>ATCC BAA-835 / DSM 22959 / JCM 33894 / BCRC 81048 / CCUG 64013 / CIP 107961 / Muc</strain>
    </source>
</reference>
<comment type="function">
    <text evidence="1">Catalyzes the methylthiolation of N6-(dimethylallyl)adenosine (i(6)A), leading to the formation of 2-methylthio-N6-(dimethylallyl)adenosine (ms(2)i(6)A) at position 37 in tRNAs that read codons beginning with uridine.</text>
</comment>
<comment type="catalytic activity">
    <reaction evidence="1">
        <text>N(6)-dimethylallyladenosine(37) in tRNA + (sulfur carrier)-SH + AH2 + 2 S-adenosyl-L-methionine = 2-methylsulfanyl-N(6)-dimethylallyladenosine(37) in tRNA + (sulfur carrier)-H + 5'-deoxyadenosine + L-methionine + A + S-adenosyl-L-homocysteine + 2 H(+)</text>
        <dbReference type="Rhea" id="RHEA:37067"/>
        <dbReference type="Rhea" id="RHEA-COMP:10375"/>
        <dbReference type="Rhea" id="RHEA-COMP:10376"/>
        <dbReference type="Rhea" id="RHEA-COMP:14737"/>
        <dbReference type="Rhea" id="RHEA-COMP:14739"/>
        <dbReference type="ChEBI" id="CHEBI:13193"/>
        <dbReference type="ChEBI" id="CHEBI:15378"/>
        <dbReference type="ChEBI" id="CHEBI:17319"/>
        <dbReference type="ChEBI" id="CHEBI:17499"/>
        <dbReference type="ChEBI" id="CHEBI:29917"/>
        <dbReference type="ChEBI" id="CHEBI:57844"/>
        <dbReference type="ChEBI" id="CHEBI:57856"/>
        <dbReference type="ChEBI" id="CHEBI:59789"/>
        <dbReference type="ChEBI" id="CHEBI:64428"/>
        <dbReference type="ChEBI" id="CHEBI:74415"/>
        <dbReference type="ChEBI" id="CHEBI:74417"/>
        <dbReference type="EC" id="2.8.4.3"/>
    </reaction>
</comment>
<comment type="cofactor">
    <cofactor evidence="1">
        <name>[4Fe-4S] cluster</name>
        <dbReference type="ChEBI" id="CHEBI:49883"/>
    </cofactor>
    <text evidence="1">Binds 2 [4Fe-4S] clusters. One cluster is coordinated with 3 cysteines and an exchangeable S-adenosyl-L-methionine.</text>
</comment>
<comment type="subunit">
    <text evidence="1">Monomer.</text>
</comment>
<comment type="subcellular location">
    <subcellularLocation>
        <location evidence="1">Cytoplasm</location>
    </subcellularLocation>
</comment>
<comment type="similarity">
    <text evidence="1">Belongs to the methylthiotransferase family. MiaB subfamily.</text>
</comment>
<feature type="chain" id="PRO_0000374100" description="tRNA-2-methylthio-N(6)-dimethylallyladenosine synthase">
    <location>
        <begin position="1"/>
        <end position="458"/>
    </location>
</feature>
<feature type="domain" description="MTTase N-terminal" evidence="1">
    <location>
        <begin position="2"/>
        <end position="118"/>
    </location>
</feature>
<feature type="domain" description="Radical SAM core" evidence="2">
    <location>
        <begin position="156"/>
        <end position="389"/>
    </location>
</feature>
<feature type="domain" description="TRAM" evidence="1">
    <location>
        <begin position="392"/>
        <end position="455"/>
    </location>
</feature>
<feature type="binding site" evidence="1">
    <location>
        <position position="11"/>
    </location>
    <ligand>
        <name>[4Fe-4S] cluster</name>
        <dbReference type="ChEBI" id="CHEBI:49883"/>
        <label>1</label>
    </ligand>
</feature>
<feature type="binding site" evidence="1">
    <location>
        <position position="47"/>
    </location>
    <ligand>
        <name>[4Fe-4S] cluster</name>
        <dbReference type="ChEBI" id="CHEBI:49883"/>
        <label>1</label>
    </ligand>
</feature>
<feature type="binding site" evidence="1">
    <location>
        <position position="81"/>
    </location>
    <ligand>
        <name>[4Fe-4S] cluster</name>
        <dbReference type="ChEBI" id="CHEBI:49883"/>
        <label>1</label>
    </ligand>
</feature>
<feature type="binding site" evidence="1">
    <location>
        <position position="170"/>
    </location>
    <ligand>
        <name>[4Fe-4S] cluster</name>
        <dbReference type="ChEBI" id="CHEBI:49883"/>
        <label>2</label>
        <note>4Fe-4S-S-AdoMet</note>
    </ligand>
</feature>
<feature type="binding site" evidence="1">
    <location>
        <position position="174"/>
    </location>
    <ligand>
        <name>[4Fe-4S] cluster</name>
        <dbReference type="ChEBI" id="CHEBI:49883"/>
        <label>2</label>
        <note>4Fe-4S-S-AdoMet</note>
    </ligand>
</feature>
<feature type="binding site" evidence="1">
    <location>
        <position position="177"/>
    </location>
    <ligand>
        <name>[4Fe-4S] cluster</name>
        <dbReference type="ChEBI" id="CHEBI:49883"/>
        <label>2</label>
        <note>4Fe-4S-S-AdoMet</note>
    </ligand>
</feature>
<proteinExistence type="inferred from homology"/>
<name>MIAB_AKKM8</name>
<protein>
    <recommendedName>
        <fullName evidence="1">tRNA-2-methylthio-N(6)-dimethylallyladenosine synthase</fullName>
        <ecNumber evidence="1">2.8.4.3</ecNumber>
    </recommendedName>
    <alternativeName>
        <fullName evidence="1">(Dimethylallyl)adenosine tRNA methylthiotransferase MiaB</fullName>
    </alternativeName>
    <alternativeName>
        <fullName evidence="1">tRNA-i(6)A37 methylthiotransferase</fullName>
    </alternativeName>
</protein>
<dbReference type="EC" id="2.8.4.3" evidence="1"/>
<dbReference type="EMBL" id="CP001071">
    <property type="protein sequence ID" value="ACD04682.1"/>
    <property type="molecule type" value="Genomic_DNA"/>
</dbReference>
<dbReference type="RefSeq" id="WP_012419897.1">
    <property type="nucleotide sequence ID" value="NZ_CP071807.1"/>
</dbReference>
<dbReference type="SMR" id="B2UQE7"/>
<dbReference type="STRING" id="349741.Amuc_0849"/>
<dbReference type="PaxDb" id="349741-Amuc_0849"/>
<dbReference type="KEGG" id="amu:Amuc_0849"/>
<dbReference type="eggNOG" id="COG0621">
    <property type="taxonomic scope" value="Bacteria"/>
</dbReference>
<dbReference type="HOGENOM" id="CLU_018697_2_0_0"/>
<dbReference type="OrthoDB" id="9805215at2"/>
<dbReference type="BioCyc" id="AMUC349741:G1GBX-920-MONOMER"/>
<dbReference type="Proteomes" id="UP000001031">
    <property type="component" value="Chromosome"/>
</dbReference>
<dbReference type="GO" id="GO:0005829">
    <property type="term" value="C:cytosol"/>
    <property type="evidence" value="ECO:0007669"/>
    <property type="project" value="TreeGrafter"/>
</dbReference>
<dbReference type="GO" id="GO:0051539">
    <property type="term" value="F:4 iron, 4 sulfur cluster binding"/>
    <property type="evidence" value="ECO:0007669"/>
    <property type="project" value="UniProtKB-UniRule"/>
</dbReference>
<dbReference type="GO" id="GO:0046872">
    <property type="term" value="F:metal ion binding"/>
    <property type="evidence" value="ECO:0007669"/>
    <property type="project" value="UniProtKB-KW"/>
</dbReference>
<dbReference type="GO" id="GO:0035597">
    <property type="term" value="F:N6-isopentenyladenosine methylthiotransferase activity"/>
    <property type="evidence" value="ECO:0007669"/>
    <property type="project" value="TreeGrafter"/>
</dbReference>
<dbReference type="CDD" id="cd01335">
    <property type="entry name" value="Radical_SAM"/>
    <property type="match status" value="1"/>
</dbReference>
<dbReference type="FunFam" id="3.40.50.12160:FF:000003">
    <property type="entry name" value="CDK5 regulatory subunit-associated protein 1"/>
    <property type="match status" value="1"/>
</dbReference>
<dbReference type="FunFam" id="3.80.30.20:FF:000001">
    <property type="entry name" value="tRNA-2-methylthio-N(6)-dimethylallyladenosine synthase 2"/>
    <property type="match status" value="1"/>
</dbReference>
<dbReference type="Gene3D" id="3.40.50.12160">
    <property type="entry name" value="Methylthiotransferase, N-terminal domain"/>
    <property type="match status" value="1"/>
</dbReference>
<dbReference type="Gene3D" id="3.80.30.20">
    <property type="entry name" value="tm_1862 like domain"/>
    <property type="match status" value="1"/>
</dbReference>
<dbReference type="HAMAP" id="MF_01864">
    <property type="entry name" value="tRNA_metthiotr_MiaB"/>
    <property type="match status" value="1"/>
</dbReference>
<dbReference type="InterPro" id="IPR006638">
    <property type="entry name" value="Elp3/MiaA/NifB-like_rSAM"/>
</dbReference>
<dbReference type="InterPro" id="IPR005839">
    <property type="entry name" value="Methylthiotransferase"/>
</dbReference>
<dbReference type="InterPro" id="IPR020612">
    <property type="entry name" value="Methylthiotransferase_CS"/>
</dbReference>
<dbReference type="InterPro" id="IPR013848">
    <property type="entry name" value="Methylthiotransferase_N"/>
</dbReference>
<dbReference type="InterPro" id="IPR038135">
    <property type="entry name" value="Methylthiotransferase_N_sf"/>
</dbReference>
<dbReference type="InterPro" id="IPR006463">
    <property type="entry name" value="MiaB_methiolase"/>
</dbReference>
<dbReference type="InterPro" id="IPR007197">
    <property type="entry name" value="rSAM"/>
</dbReference>
<dbReference type="InterPro" id="IPR023404">
    <property type="entry name" value="rSAM_horseshoe"/>
</dbReference>
<dbReference type="InterPro" id="IPR002792">
    <property type="entry name" value="TRAM_dom"/>
</dbReference>
<dbReference type="NCBIfam" id="TIGR01574">
    <property type="entry name" value="miaB-methiolase"/>
    <property type="match status" value="1"/>
</dbReference>
<dbReference type="NCBIfam" id="TIGR00089">
    <property type="entry name" value="MiaB/RimO family radical SAM methylthiotransferase"/>
    <property type="match status" value="1"/>
</dbReference>
<dbReference type="PANTHER" id="PTHR43020">
    <property type="entry name" value="CDK5 REGULATORY SUBUNIT-ASSOCIATED PROTEIN 1"/>
    <property type="match status" value="1"/>
</dbReference>
<dbReference type="PANTHER" id="PTHR43020:SF2">
    <property type="entry name" value="MITOCHONDRIAL TRNA METHYLTHIOTRANSFERASE CDK5RAP1"/>
    <property type="match status" value="1"/>
</dbReference>
<dbReference type="Pfam" id="PF04055">
    <property type="entry name" value="Radical_SAM"/>
    <property type="match status" value="1"/>
</dbReference>
<dbReference type="Pfam" id="PF01938">
    <property type="entry name" value="TRAM"/>
    <property type="match status" value="1"/>
</dbReference>
<dbReference type="Pfam" id="PF00919">
    <property type="entry name" value="UPF0004"/>
    <property type="match status" value="1"/>
</dbReference>
<dbReference type="SFLD" id="SFLDF00273">
    <property type="entry name" value="(dimethylallyl)adenosine_tRNA"/>
    <property type="match status" value="1"/>
</dbReference>
<dbReference type="SFLD" id="SFLDG01082">
    <property type="entry name" value="B12-binding_domain_containing"/>
    <property type="match status" value="1"/>
</dbReference>
<dbReference type="SFLD" id="SFLDG01061">
    <property type="entry name" value="methylthiotransferase"/>
    <property type="match status" value="1"/>
</dbReference>
<dbReference type="SMART" id="SM00729">
    <property type="entry name" value="Elp3"/>
    <property type="match status" value="1"/>
</dbReference>
<dbReference type="SUPFAM" id="SSF102114">
    <property type="entry name" value="Radical SAM enzymes"/>
    <property type="match status" value="1"/>
</dbReference>
<dbReference type="PROSITE" id="PS51449">
    <property type="entry name" value="MTTASE_N"/>
    <property type="match status" value="1"/>
</dbReference>
<dbReference type="PROSITE" id="PS01278">
    <property type="entry name" value="MTTASE_RADICAL"/>
    <property type="match status" value="1"/>
</dbReference>
<dbReference type="PROSITE" id="PS51918">
    <property type="entry name" value="RADICAL_SAM"/>
    <property type="match status" value="1"/>
</dbReference>
<dbReference type="PROSITE" id="PS50926">
    <property type="entry name" value="TRAM"/>
    <property type="match status" value="1"/>
</dbReference>
<accession>B2UQE7</accession>